<proteinExistence type="uncertain"/>
<evidence type="ECO:0000255" key="1"/>
<evidence type="ECO:0000305" key="2"/>
<evidence type="ECO:0000305" key="3">
    <source>
    </source>
</evidence>
<dbReference type="EMBL" id="Z46259">
    <property type="status" value="NOT_ANNOTATED_CDS"/>
    <property type="molecule type" value="Genomic_DNA"/>
</dbReference>
<dbReference type="EMBL" id="Z71601">
    <property type="protein sequence ID" value="CAA96257.1"/>
    <property type="molecule type" value="Genomic_DNA"/>
</dbReference>
<dbReference type="EMBL" id="AY693325">
    <property type="protein sequence ID" value="AAT93344.1"/>
    <property type="molecule type" value="Genomic_DNA"/>
</dbReference>
<dbReference type="PIR" id="S63305">
    <property type="entry name" value="S63305"/>
</dbReference>
<dbReference type="SMR" id="P53825"/>
<dbReference type="DIP" id="DIP-4691N"/>
<dbReference type="STRING" id="4932.YNL324W"/>
<dbReference type="PaxDb" id="4932-YNL324W"/>
<dbReference type="EnsemblFungi" id="YNL324W_mRNA">
    <property type="protein sequence ID" value="YNL324W"/>
    <property type="gene ID" value="YNL324W"/>
</dbReference>
<dbReference type="AGR" id="SGD:S000005268"/>
<dbReference type="SGD" id="S000005268">
    <property type="gene designation" value="YNL324W"/>
</dbReference>
<dbReference type="HOGENOM" id="CLU_1929235_0_0_1"/>
<dbReference type="GO" id="GO:0016020">
    <property type="term" value="C:membrane"/>
    <property type="evidence" value="ECO:0007669"/>
    <property type="project" value="UniProtKB-SubCell"/>
</dbReference>
<sequence length="131" mass="14855">MNPRRPYPVIFLCRPSSVASSKLASTFMISFLVKKTLSSNTVNSPRGTVRSISRIRNMVSLLLLPTIYIRSLVSYNVYLPITNLEVFLCLDPDVVSIPPPRVCSIASLFILVLFLFCFALRYYVSKLINFK</sequence>
<reference key="1">
    <citation type="journal article" date="1995" name="Yeast">
        <title>Sequencing analysis of a 15.4 kb fragment of yeast chromosome XIV identifies the RPD3, PAS8 and KRE1 loci, five new open reading frames.</title>
        <authorList>
            <person name="Maftahi M."/>
            <person name="Nicaud J.-M."/>
            <person name="Levesque H."/>
            <person name="Gaillardin C."/>
        </authorList>
    </citation>
    <scope>NUCLEOTIDE SEQUENCE [GENOMIC DNA]</scope>
    <source>
        <strain>S288c / FY1676</strain>
    </source>
</reference>
<reference key="2">
    <citation type="journal article" date="1997" name="Nature">
        <title>The nucleotide sequence of Saccharomyces cerevisiae chromosome XIV and its evolutionary implications.</title>
        <authorList>
            <person name="Philippsen P."/>
            <person name="Kleine K."/>
            <person name="Poehlmann R."/>
            <person name="Duesterhoeft A."/>
            <person name="Hamberg K."/>
            <person name="Hegemann J.H."/>
            <person name="Obermaier B."/>
            <person name="Urrestarazu L.A."/>
            <person name="Aert R."/>
            <person name="Albermann K."/>
            <person name="Altmann R."/>
            <person name="Andre B."/>
            <person name="Baladron V."/>
            <person name="Ballesta J.P.G."/>
            <person name="Becam A.-M."/>
            <person name="Beinhauer J.D."/>
            <person name="Boskovic J."/>
            <person name="Buitrago M.J."/>
            <person name="Bussereau F."/>
            <person name="Coster F."/>
            <person name="Crouzet M."/>
            <person name="D'Angelo M."/>
            <person name="Dal Pero F."/>
            <person name="De Antoni A."/>
            <person name="del Rey F."/>
            <person name="Doignon F."/>
            <person name="Domdey H."/>
            <person name="Dubois E."/>
            <person name="Fiedler T.A."/>
            <person name="Fleig U."/>
            <person name="Floeth M."/>
            <person name="Fritz C."/>
            <person name="Gaillardin C."/>
            <person name="Garcia-Cantalejo J.M."/>
            <person name="Glansdorff N."/>
            <person name="Goffeau A."/>
            <person name="Gueldener U."/>
            <person name="Herbert C.J."/>
            <person name="Heumann K."/>
            <person name="Heuss-Neitzel D."/>
            <person name="Hilbert H."/>
            <person name="Hinni K."/>
            <person name="Iraqui Houssaini I."/>
            <person name="Jacquet M."/>
            <person name="Jimenez A."/>
            <person name="Jonniaux J.-L."/>
            <person name="Karpfinger-Hartl L."/>
            <person name="Lanfranchi G."/>
            <person name="Lepingle A."/>
            <person name="Levesque H."/>
            <person name="Lyck R."/>
            <person name="Maftahi M."/>
            <person name="Mallet L."/>
            <person name="Maurer C.T.C."/>
            <person name="Messenguy F."/>
            <person name="Mewes H.-W."/>
            <person name="Moestl D."/>
            <person name="Nasr F."/>
            <person name="Nicaud J.-M."/>
            <person name="Niedenthal R.K."/>
            <person name="Pandolfo D."/>
            <person name="Pierard A."/>
            <person name="Piravandi E."/>
            <person name="Planta R.J."/>
            <person name="Pohl T.M."/>
            <person name="Purnelle B."/>
            <person name="Rebischung C."/>
            <person name="Remacha M.A."/>
            <person name="Revuelta J.L."/>
            <person name="Rinke M."/>
            <person name="Saiz J.E."/>
            <person name="Sartorello F."/>
            <person name="Scherens B."/>
            <person name="Sen-Gupta M."/>
            <person name="Soler-Mira A."/>
            <person name="Urbanus J.H.M."/>
            <person name="Valle G."/>
            <person name="Van Dyck L."/>
            <person name="Verhasselt P."/>
            <person name="Vierendeels F."/>
            <person name="Vissers S."/>
            <person name="Voet M."/>
            <person name="Volckaert G."/>
            <person name="Wach A."/>
            <person name="Wambutt R."/>
            <person name="Wedler H."/>
            <person name="Zollner A."/>
            <person name="Hani J."/>
        </authorList>
    </citation>
    <scope>NUCLEOTIDE SEQUENCE [LARGE SCALE GENOMIC DNA]</scope>
    <source>
        <strain>ATCC 204508 / S288c</strain>
    </source>
</reference>
<reference key="3">
    <citation type="journal article" date="2014" name="G3 (Bethesda)">
        <title>The reference genome sequence of Saccharomyces cerevisiae: Then and now.</title>
        <authorList>
            <person name="Engel S.R."/>
            <person name="Dietrich F.S."/>
            <person name="Fisk D.G."/>
            <person name="Binkley G."/>
            <person name="Balakrishnan R."/>
            <person name="Costanzo M.C."/>
            <person name="Dwight S.S."/>
            <person name="Hitz B.C."/>
            <person name="Karra K."/>
            <person name="Nash R.S."/>
            <person name="Weng S."/>
            <person name="Wong E.D."/>
            <person name="Lloyd P."/>
            <person name="Skrzypek M.S."/>
            <person name="Miyasato S.R."/>
            <person name="Simison M."/>
            <person name="Cherry J.M."/>
        </authorList>
    </citation>
    <scope>GENOME REANNOTATION</scope>
    <source>
        <strain>ATCC 204508 / S288c</strain>
    </source>
</reference>
<reference key="4">
    <citation type="journal article" date="2007" name="Genome Res.">
        <title>Approaching a complete repository of sequence-verified protein-encoding clones for Saccharomyces cerevisiae.</title>
        <authorList>
            <person name="Hu Y."/>
            <person name="Rolfs A."/>
            <person name="Bhullar B."/>
            <person name="Murthy T.V.S."/>
            <person name="Zhu C."/>
            <person name="Berger M.F."/>
            <person name="Camargo A.A."/>
            <person name="Kelley F."/>
            <person name="McCarron S."/>
            <person name="Jepson D."/>
            <person name="Richardson A."/>
            <person name="Raphael J."/>
            <person name="Moreira D."/>
            <person name="Taycher E."/>
            <person name="Zuo D."/>
            <person name="Mohr S."/>
            <person name="Kane M.F."/>
            <person name="Williamson J."/>
            <person name="Simpson A.J.G."/>
            <person name="Bulyk M.L."/>
            <person name="Harlow E."/>
            <person name="Marsischky G."/>
            <person name="Kolodner R.D."/>
            <person name="LaBaer J."/>
        </authorList>
    </citation>
    <scope>NUCLEOTIDE SEQUENCE [GENOMIC DNA]</scope>
    <source>
        <strain>ATCC 204508 / S288c</strain>
    </source>
</reference>
<accession>P53825</accession>
<organism>
    <name type="scientific">Saccharomyces cerevisiae (strain ATCC 204508 / S288c)</name>
    <name type="common">Baker's yeast</name>
    <dbReference type="NCBI Taxonomy" id="559292"/>
    <lineage>
        <taxon>Eukaryota</taxon>
        <taxon>Fungi</taxon>
        <taxon>Dikarya</taxon>
        <taxon>Ascomycota</taxon>
        <taxon>Saccharomycotina</taxon>
        <taxon>Saccharomycetes</taxon>
        <taxon>Saccharomycetales</taxon>
        <taxon>Saccharomycetaceae</taxon>
        <taxon>Saccharomyces</taxon>
    </lineage>
</organism>
<feature type="chain" id="PRO_0000203363" description="Putative uncharacterized protein YNL324W">
    <location>
        <begin position="1"/>
        <end position="131"/>
    </location>
</feature>
<feature type="transmembrane region" description="Helical" evidence="1">
    <location>
        <begin position="61"/>
        <end position="81"/>
    </location>
</feature>
<feature type="transmembrane region" description="Helical" evidence="1">
    <location>
        <begin position="102"/>
        <end position="122"/>
    </location>
</feature>
<protein>
    <recommendedName>
        <fullName>Putative uncharacterized protein YNL324W</fullName>
    </recommendedName>
</protein>
<keyword id="KW-0472">Membrane</keyword>
<keyword id="KW-0812">Transmembrane</keyword>
<keyword id="KW-1133">Transmembrane helix</keyword>
<comment type="subcellular location">
    <subcellularLocation>
        <location evidence="2">Membrane</location>
        <topology evidence="2">Multi-pass membrane protein</topology>
    </subcellularLocation>
</comment>
<comment type="miscellaneous">
    <text evidence="2">Partially overlaps FIG4.</text>
</comment>
<comment type="caution">
    <text evidence="3">Product of a dubious gene prediction unlikely to encode a functional protein. Because of that it is not part of the S.cerevisiae S288c complete/reference proteome set.</text>
</comment>
<name>YN64_YEAST</name>
<gene>
    <name type="ordered locus">YNL324W</name>
    <name type="ORF">N0332</name>
</gene>